<feature type="chain" id="PRO_0000332429" description="Crossover junction endodeoxyribonuclease RuvC">
    <location>
        <begin position="1"/>
        <end position="185"/>
    </location>
</feature>
<feature type="active site" evidence="1">
    <location>
        <position position="7"/>
    </location>
</feature>
<feature type="active site" evidence="1">
    <location>
        <position position="68"/>
    </location>
</feature>
<feature type="active site" evidence="1">
    <location>
        <position position="141"/>
    </location>
</feature>
<feature type="binding site" evidence="1">
    <location>
        <position position="7"/>
    </location>
    <ligand>
        <name>Mg(2+)</name>
        <dbReference type="ChEBI" id="CHEBI:18420"/>
        <label>1</label>
    </ligand>
</feature>
<feature type="binding site" evidence="1">
    <location>
        <position position="68"/>
    </location>
    <ligand>
        <name>Mg(2+)</name>
        <dbReference type="ChEBI" id="CHEBI:18420"/>
        <label>2</label>
    </ligand>
</feature>
<feature type="binding site" evidence="1">
    <location>
        <position position="141"/>
    </location>
    <ligand>
        <name>Mg(2+)</name>
        <dbReference type="ChEBI" id="CHEBI:18420"/>
        <label>1</label>
    </ligand>
</feature>
<proteinExistence type="inferred from homology"/>
<gene>
    <name evidence="1" type="primary">ruvC</name>
    <name type="ordered locus">Mkms_2312</name>
</gene>
<evidence type="ECO:0000255" key="1">
    <source>
        <dbReference type="HAMAP-Rule" id="MF_00034"/>
    </source>
</evidence>
<evidence type="ECO:0000305" key="2"/>
<protein>
    <recommendedName>
        <fullName evidence="1">Crossover junction endodeoxyribonuclease RuvC</fullName>
        <ecNumber evidence="1">3.1.21.10</ecNumber>
    </recommendedName>
    <alternativeName>
        <fullName evidence="1">Holliday junction nuclease RuvC</fullName>
    </alternativeName>
    <alternativeName>
        <fullName evidence="1">Holliday junction resolvase RuvC</fullName>
    </alternativeName>
</protein>
<comment type="function">
    <text evidence="1">The RuvA-RuvB-RuvC complex processes Holliday junction (HJ) DNA during genetic recombination and DNA repair. Endonuclease that resolves HJ intermediates. Cleaves cruciform DNA by making single-stranded nicks across the HJ at symmetrical positions within the homologous arms, yielding a 5'-phosphate and a 3'-hydroxyl group; requires a central core of homology in the junction. The consensus cleavage sequence is 5'-(A/T)TT(C/G)-3'. Cleavage occurs on the 3'-side of the TT dinucleotide at the point of strand exchange. HJ branch migration catalyzed by RuvA-RuvB allows RuvC to scan DNA until it finds its consensus sequence, where it cleaves and resolves the cruciform DNA.</text>
</comment>
<comment type="catalytic activity">
    <reaction evidence="1">
        <text>Endonucleolytic cleavage at a junction such as a reciprocal single-stranded crossover between two homologous DNA duplexes (Holliday junction).</text>
        <dbReference type="EC" id="3.1.21.10"/>
    </reaction>
</comment>
<comment type="cofactor">
    <cofactor evidence="1">
        <name>Mg(2+)</name>
        <dbReference type="ChEBI" id="CHEBI:18420"/>
    </cofactor>
    <text evidence="1">Binds 2 Mg(2+) ion per subunit.</text>
</comment>
<comment type="subunit">
    <text evidence="1">Homodimer which binds Holliday junction (HJ) DNA. The HJ becomes 2-fold symmetrical on binding to RuvC with unstacked arms; it has a different conformation from HJ DNA in complex with RuvA. In the full resolvosome a probable DNA-RuvA(4)-RuvB(12)-RuvC(2) complex forms which resolves the HJ.</text>
</comment>
<comment type="subcellular location">
    <subcellularLocation>
        <location evidence="1">Cytoplasm</location>
    </subcellularLocation>
</comment>
<comment type="similarity">
    <text evidence="1">Belongs to the RuvC family.</text>
</comment>
<comment type="sequence caution" evidence="2">
    <conflict type="erroneous initiation">
        <sequence resource="EMBL-CDS" id="ABL91510"/>
    </conflict>
    <text>Extended N-terminus.</text>
</comment>
<name>RUVC_MYCSK</name>
<sequence length="185" mass="19860">MRVMGVDPGLTRCGLSVIESGQGRKVIALDVDVVRTPADEQLHRRLLIISDTVEHWMDTHRPDVIAIERVFANHNANTAMGTAQAGGVIALAAAKRDIDVHFHTPSEVKAAVTGNGRADKAQVTEMVTRILALQAKPTPADAADALALAICHCWRAPMIARMAAAEAMAAEARRKYQAKLKAARA</sequence>
<reference key="1">
    <citation type="submission" date="2006-12" db="EMBL/GenBank/DDBJ databases">
        <title>Complete sequence of chromosome of Mycobacterium sp. KMS.</title>
        <authorList>
            <consortium name="US DOE Joint Genome Institute"/>
            <person name="Copeland A."/>
            <person name="Lucas S."/>
            <person name="Lapidus A."/>
            <person name="Barry K."/>
            <person name="Detter J.C."/>
            <person name="Glavina del Rio T."/>
            <person name="Hammon N."/>
            <person name="Israni S."/>
            <person name="Dalin E."/>
            <person name="Tice H."/>
            <person name="Pitluck S."/>
            <person name="Kiss H."/>
            <person name="Brettin T."/>
            <person name="Bruce D."/>
            <person name="Han C."/>
            <person name="Tapia R."/>
            <person name="Gilna P."/>
            <person name="Schmutz J."/>
            <person name="Larimer F."/>
            <person name="Land M."/>
            <person name="Hauser L."/>
            <person name="Kyrpides N."/>
            <person name="Mikhailova N."/>
            <person name="Miller C.D."/>
            <person name="Richardson P."/>
        </authorList>
    </citation>
    <scope>NUCLEOTIDE SEQUENCE [LARGE SCALE GENOMIC DNA]</scope>
    <source>
        <strain>KMS</strain>
    </source>
</reference>
<dbReference type="EC" id="3.1.21.10" evidence="1"/>
<dbReference type="EMBL" id="CP000518">
    <property type="protein sequence ID" value="ABL91510.1"/>
    <property type="status" value="ALT_INIT"/>
    <property type="molecule type" value="Genomic_DNA"/>
</dbReference>
<dbReference type="SMR" id="A1UFA2"/>
<dbReference type="STRING" id="189918.Mkms_2312"/>
<dbReference type="KEGG" id="mkm:Mkms_2312"/>
<dbReference type="HOGENOM" id="CLU_091257_0_2_11"/>
<dbReference type="OrthoDB" id="9805499at2"/>
<dbReference type="GO" id="GO:0005737">
    <property type="term" value="C:cytoplasm"/>
    <property type="evidence" value="ECO:0007669"/>
    <property type="project" value="UniProtKB-SubCell"/>
</dbReference>
<dbReference type="GO" id="GO:0048476">
    <property type="term" value="C:Holliday junction resolvase complex"/>
    <property type="evidence" value="ECO:0007669"/>
    <property type="project" value="UniProtKB-UniRule"/>
</dbReference>
<dbReference type="GO" id="GO:0008821">
    <property type="term" value="F:crossover junction DNA endonuclease activity"/>
    <property type="evidence" value="ECO:0007669"/>
    <property type="project" value="UniProtKB-UniRule"/>
</dbReference>
<dbReference type="GO" id="GO:0003677">
    <property type="term" value="F:DNA binding"/>
    <property type="evidence" value="ECO:0007669"/>
    <property type="project" value="UniProtKB-KW"/>
</dbReference>
<dbReference type="GO" id="GO:0000287">
    <property type="term" value="F:magnesium ion binding"/>
    <property type="evidence" value="ECO:0007669"/>
    <property type="project" value="UniProtKB-UniRule"/>
</dbReference>
<dbReference type="GO" id="GO:0006310">
    <property type="term" value="P:DNA recombination"/>
    <property type="evidence" value="ECO:0007669"/>
    <property type="project" value="UniProtKB-UniRule"/>
</dbReference>
<dbReference type="GO" id="GO:0006281">
    <property type="term" value="P:DNA repair"/>
    <property type="evidence" value="ECO:0007669"/>
    <property type="project" value="UniProtKB-UniRule"/>
</dbReference>
<dbReference type="CDD" id="cd16962">
    <property type="entry name" value="RuvC"/>
    <property type="match status" value="1"/>
</dbReference>
<dbReference type="FunFam" id="3.30.420.10:FF:000002">
    <property type="entry name" value="Crossover junction endodeoxyribonuclease RuvC"/>
    <property type="match status" value="1"/>
</dbReference>
<dbReference type="Gene3D" id="3.30.420.10">
    <property type="entry name" value="Ribonuclease H-like superfamily/Ribonuclease H"/>
    <property type="match status" value="1"/>
</dbReference>
<dbReference type="HAMAP" id="MF_00034">
    <property type="entry name" value="RuvC"/>
    <property type="match status" value="1"/>
</dbReference>
<dbReference type="InterPro" id="IPR012337">
    <property type="entry name" value="RNaseH-like_sf"/>
</dbReference>
<dbReference type="InterPro" id="IPR036397">
    <property type="entry name" value="RNaseH_sf"/>
</dbReference>
<dbReference type="InterPro" id="IPR020563">
    <property type="entry name" value="X-over_junc_endoDNase_Mg_BS"/>
</dbReference>
<dbReference type="InterPro" id="IPR002176">
    <property type="entry name" value="X-over_junc_endoDNase_RuvC"/>
</dbReference>
<dbReference type="NCBIfam" id="NF000711">
    <property type="entry name" value="PRK00039.2-1"/>
    <property type="match status" value="1"/>
</dbReference>
<dbReference type="NCBIfam" id="TIGR00228">
    <property type="entry name" value="ruvC"/>
    <property type="match status" value="1"/>
</dbReference>
<dbReference type="PANTHER" id="PTHR30194">
    <property type="entry name" value="CROSSOVER JUNCTION ENDODEOXYRIBONUCLEASE RUVC"/>
    <property type="match status" value="1"/>
</dbReference>
<dbReference type="PANTHER" id="PTHR30194:SF3">
    <property type="entry name" value="CROSSOVER JUNCTION ENDODEOXYRIBONUCLEASE RUVC"/>
    <property type="match status" value="1"/>
</dbReference>
<dbReference type="Pfam" id="PF02075">
    <property type="entry name" value="RuvC"/>
    <property type="match status" value="1"/>
</dbReference>
<dbReference type="PRINTS" id="PR00696">
    <property type="entry name" value="RSOLVASERUVC"/>
</dbReference>
<dbReference type="SUPFAM" id="SSF53098">
    <property type="entry name" value="Ribonuclease H-like"/>
    <property type="match status" value="1"/>
</dbReference>
<dbReference type="PROSITE" id="PS01321">
    <property type="entry name" value="RUVC"/>
    <property type="match status" value="1"/>
</dbReference>
<accession>A1UFA2</accession>
<keyword id="KW-0963">Cytoplasm</keyword>
<keyword id="KW-0227">DNA damage</keyword>
<keyword id="KW-0233">DNA recombination</keyword>
<keyword id="KW-0234">DNA repair</keyword>
<keyword id="KW-0238">DNA-binding</keyword>
<keyword id="KW-0255">Endonuclease</keyword>
<keyword id="KW-0378">Hydrolase</keyword>
<keyword id="KW-0460">Magnesium</keyword>
<keyword id="KW-0479">Metal-binding</keyword>
<keyword id="KW-0540">Nuclease</keyword>
<organism>
    <name type="scientific">Mycobacterium sp. (strain KMS)</name>
    <dbReference type="NCBI Taxonomy" id="189918"/>
    <lineage>
        <taxon>Bacteria</taxon>
        <taxon>Bacillati</taxon>
        <taxon>Actinomycetota</taxon>
        <taxon>Actinomycetes</taxon>
        <taxon>Mycobacteriales</taxon>
        <taxon>Mycobacteriaceae</taxon>
        <taxon>Mycobacterium</taxon>
    </lineage>
</organism>